<organism>
    <name type="scientific">Paracidovorax citrulli (strain AAC00-1)</name>
    <name type="common">Acidovorax citrulli</name>
    <dbReference type="NCBI Taxonomy" id="397945"/>
    <lineage>
        <taxon>Bacteria</taxon>
        <taxon>Pseudomonadati</taxon>
        <taxon>Pseudomonadota</taxon>
        <taxon>Betaproteobacteria</taxon>
        <taxon>Burkholderiales</taxon>
        <taxon>Comamonadaceae</taxon>
        <taxon>Paracidovorax</taxon>
    </lineage>
</organism>
<evidence type="ECO:0000255" key="1">
    <source>
        <dbReference type="HAMAP-Rule" id="MF_01274"/>
    </source>
</evidence>
<accession>A1TUS2</accession>
<name>COAX_PARC0</name>
<reference key="1">
    <citation type="submission" date="2006-12" db="EMBL/GenBank/DDBJ databases">
        <title>Complete sequence of Acidovorax avenae subsp. citrulli AAC00-1.</title>
        <authorList>
            <person name="Copeland A."/>
            <person name="Lucas S."/>
            <person name="Lapidus A."/>
            <person name="Barry K."/>
            <person name="Detter J.C."/>
            <person name="Glavina del Rio T."/>
            <person name="Dalin E."/>
            <person name="Tice H."/>
            <person name="Pitluck S."/>
            <person name="Kiss H."/>
            <person name="Brettin T."/>
            <person name="Bruce D."/>
            <person name="Han C."/>
            <person name="Tapia R."/>
            <person name="Gilna P."/>
            <person name="Schmutz J."/>
            <person name="Larimer F."/>
            <person name="Land M."/>
            <person name="Hauser L."/>
            <person name="Kyrpides N."/>
            <person name="Kim E."/>
            <person name="Stahl D."/>
            <person name="Richardson P."/>
        </authorList>
    </citation>
    <scope>NUCLEOTIDE SEQUENCE [LARGE SCALE GENOMIC DNA]</scope>
    <source>
        <strain>AAC00-1</strain>
    </source>
</reference>
<comment type="function">
    <text evidence="1">Catalyzes the phosphorylation of pantothenate (Pan), the first step in CoA biosynthesis.</text>
</comment>
<comment type="catalytic activity">
    <reaction evidence="1">
        <text>(R)-pantothenate + ATP = (R)-4'-phosphopantothenate + ADP + H(+)</text>
        <dbReference type="Rhea" id="RHEA:16373"/>
        <dbReference type="ChEBI" id="CHEBI:10986"/>
        <dbReference type="ChEBI" id="CHEBI:15378"/>
        <dbReference type="ChEBI" id="CHEBI:29032"/>
        <dbReference type="ChEBI" id="CHEBI:30616"/>
        <dbReference type="ChEBI" id="CHEBI:456216"/>
        <dbReference type="EC" id="2.7.1.33"/>
    </reaction>
</comment>
<comment type="cofactor">
    <cofactor evidence="1">
        <name>NH4(+)</name>
        <dbReference type="ChEBI" id="CHEBI:28938"/>
    </cofactor>
    <cofactor evidence="1">
        <name>K(+)</name>
        <dbReference type="ChEBI" id="CHEBI:29103"/>
    </cofactor>
    <text evidence="1">A monovalent cation. Ammonium or potassium.</text>
</comment>
<comment type="pathway">
    <text evidence="1">Cofactor biosynthesis; coenzyme A biosynthesis; CoA from (R)-pantothenate: step 1/5.</text>
</comment>
<comment type="subunit">
    <text evidence="1">Homodimer.</text>
</comment>
<comment type="subcellular location">
    <subcellularLocation>
        <location evidence="1">Cytoplasm</location>
    </subcellularLocation>
</comment>
<comment type="similarity">
    <text evidence="1">Belongs to the type III pantothenate kinase family.</text>
</comment>
<keyword id="KW-0067">ATP-binding</keyword>
<keyword id="KW-0173">Coenzyme A biosynthesis</keyword>
<keyword id="KW-0963">Cytoplasm</keyword>
<keyword id="KW-0418">Kinase</keyword>
<keyword id="KW-0547">Nucleotide-binding</keyword>
<keyword id="KW-0630">Potassium</keyword>
<keyword id="KW-0808">Transferase</keyword>
<sequence>MTFLAIDVGNTRLKWAMYDAPKPGAAVLAHGAEFLDHIERLADSAWAGLPAPTRMLGCVVAGDAVRRRVMEQMEWWDVPSHWVVPSAEEAGLVNGYDHPTRLGSDRWVAMIGARHRLLRQGPARPLVVVMVGTAVTVEAIDAEGRFLGGLILPGHGIMLRALESGTAGLHVPTGEVKLFPTNTSDALTSGGTYAIAGAVERMVQHVIQHCGEEPACMMTGGAGWKMAPSMTRPFDLIENLIFEGLLAIAAERFR</sequence>
<dbReference type="EC" id="2.7.1.33" evidence="1"/>
<dbReference type="EMBL" id="CP000512">
    <property type="protein sequence ID" value="ABM34710.1"/>
    <property type="molecule type" value="Genomic_DNA"/>
</dbReference>
<dbReference type="RefSeq" id="WP_011797184.1">
    <property type="nucleotide sequence ID" value="NC_008752.1"/>
</dbReference>
<dbReference type="SMR" id="A1TUS2"/>
<dbReference type="STRING" id="397945.Aave_4169"/>
<dbReference type="GeneID" id="79789140"/>
<dbReference type="KEGG" id="aav:Aave_4169"/>
<dbReference type="eggNOG" id="COG1521">
    <property type="taxonomic scope" value="Bacteria"/>
</dbReference>
<dbReference type="HOGENOM" id="CLU_066627_0_0_4"/>
<dbReference type="OrthoDB" id="9781305at2"/>
<dbReference type="UniPathway" id="UPA00241">
    <property type="reaction ID" value="UER00352"/>
</dbReference>
<dbReference type="Proteomes" id="UP000002596">
    <property type="component" value="Chromosome"/>
</dbReference>
<dbReference type="GO" id="GO:0005737">
    <property type="term" value="C:cytoplasm"/>
    <property type="evidence" value="ECO:0007669"/>
    <property type="project" value="UniProtKB-SubCell"/>
</dbReference>
<dbReference type="GO" id="GO:0005524">
    <property type="term" value="F:ATP binding"/>
    <property type="evidence" value="ECO:0007669"/>
    <property type="project" value="UniProtKB-UniRule"/>
</dbReference>
<dbReference type="GO" id="GO:0004594">
    <property type="term" value="F:pantothenate kinase activity"/>
    <property type="evidence" value="ECO:0007669"/>
    <property type="project" value="UniProtKB-UniRule"/>
</dbReference>
<dbReference type="GO" id="GO:0015937">
    <property type="term" value="P:coenzyme A biosynthetic process"/>
    <property type="evidence" value="ECO:0007669"/>
    <property type="project" value="UniProtKB-UniRule"/>
</dbReference>
<dbReference type="CDD" id="cd24015">
    <property type="entry name" value="ASKHA_NBD_PanK-III"/>
    <property type="match status" value="1"/>
</dbReference>
<dbReference type="Gene3D" id="3.30.420.40">
    <property type="match status" value="2"/>
</dbReference>
<dbReference type="HAMAP" id="MF_01274">
    <property type="entry name" value="Pantothen_kinase_3"/>
    <property type="match status" value="1"/>
</dbReference>
<dbReference type="InterPro" id="IPR043129">
    <property type="entry name" value="ATPase_NBD"/>
</dbReference>
<dbReference type="InterPro" id="IPR004619">
    <property type="entry name" value="Type_III_PanK"/>
</dbReference>
<dbReference type="NCBIfam" id="TIGR00671">
    <property type="entry name" value="baf"/>
    <property type="match status" value="1"/>
</dbReference>
<dbReference type="PANTHER" id="PTHR34265">
    <property type="entry name" value="TYPE III PANTOTHENATE KINASE"/>
    <property type="match status" value="1"/>
</dbReference>
<dbReference type="PANTHER" id="PTHR34265:SF1">
    <property type="entry name" value="TYPE III PANTOTHENATE KINASE"/>
    <property type="match status" value="1"/>
</dbReference>
<dbReference type="Pfam" id="PF03309">
    <property type="entry name" value="Pan_kinase"/>
    <property type="match status" value="1"/>
</dbReference>
<dbReference type="SUPFAM" id="SSF53067">
    <property type="entry name" value="Actin-like ATPase domain"/>
    <property type="match status" value="2"/>
</dbReference>
<gene>
    <name evidence="1" type="primary">coaX</name>
    <name type="ordered locus">Aave_4169</name>
</gene>
<feature type="chain" id="PRO_1000054352" description="Type III pantothenate kinase">
    <location>
        <begin position="1"/>
        <end position="254"/>
    </location>
</feature>
<feature type="active site" description="Proton acceptor" evidence="1">
    <location>
        <position position="105"/>
    </location>
</feature>
<feature type="binding site" evidence="1">
    <location>
        <begin position="7"/>
        <end position="14"/>
    </location>
    <ligand>
        <name>ATP</name>
        <dbReference type="ChEBI" id="CHEBI:30616"/>
    </ligand>
</feature>
<feature type="binding site" evidence="1">
    <location>
        <position position="96"/>
    </location>
    <ligand>
        <name>substrate</name>
    </ligand>
</feature>
<feature type="binding site" evidence="1">
    <location>
        <begin position="103"/>
        <end position="106"/>
    </location>
    <ligand>
        <name>substrate</name>
    </ligand>
</feature>
<feature type="binding site" evidence="1">
    <location>
        <position position="133"/>
    </location>
    <ligand>
        <name>ATP</name>
        <dbReference type="ChEBI" id="CHEBI:30616"/>
    </ligand>
</feature>
<feature type="binding site" evidence="1">
    <location>
        <position position="183"/>
    </location>
    <ligand>
        <name>substrate</name>
    </ligand>
</feature>
<protein>
    <recommendedName>
        <fullName evidence="1">Type III pantothenate kinase</fullName>
        <ecNumber evidence="1">2.7.1.33</ecNumber>
    </recommendedName>
    <alternativeName>
        <fullName evidence="1">PanK-III</fullName>
    </alternativeName>
    <alternativeName>
        <fullName evidence="1">Pantothenic acid kinase</fullName>
    </alternativeName>
</protein>
<proteinExistence type="inferred from homology"/>